<protein>
    <recommendedName>
        <fullName evidence="1">dTDP-4-amino-4,6-dideoxyglucose formyltransferase</fullName>
        <shortName evidence="1">dTDP-Qui4N formyltransferase</shortName>
        <ecNumber evidence="1">2.1.2.-</ecNumber>
    </recommendedName>
    <alternativeName>
        <fullName evidence="2">Sugar N-formyltransferase BQ2027_MB3438C</fullName>
    </alternativeName>
</protein>
<sequence length="234" mass="26515">MTILILTDNVHAHALAVDLQARHGDMDVYQSPIGQLPGVPRCDVAERVAEIVERYDLVLSFHCKQRFPAALIDGVRCVNVHPGFNPYNRGWFPQVFSIIDGQKVGVTIHEIDDQLDHGPIIAQRECAIESWDSSGSVYARLMDIERELVLEHFDAIRDGSYTAKSPATEGNLNLKKDFEQLRRLDLNERGTFGHFLNRLRALTHDDFRNAWFVDASGRKVFVRVVLEPEKPAEA</sequence>
<reference key="1">
    <citation type="journal article" date="2003" name="Proc. Natl. Acad. Sci. U.S.A.">
        <title>The complete genome sequence of Mycobacterium bovis.</title>
        <authorList>
            <person name="Garnier T."/>
            <person name="Eiglmeier K."/>
            <person name="Camus J.-C."/>
            <person name="Medina N."/>
            <person name="Mansoor H."/>
            <person name="Pryor M."/>
            <person name="Duthoy S."/>
            <person name="Grondin S."/>
            <person name="Lacroix C."/>
            <person name="Monsempe C."/>
            <person name="Simon S."/>
            <person name="Harris B."/>
            <person name="Atkin R."/>
            <person name="Doggett J."/>
            <person name="Mayes R."/>
            <person name="Keating L."/>
            <person name="Wheeler P.R."/>
            <person name="Parkhill J."/>
            <person name="Barrell B.G."/>
            <person name="Cole S.T."/>
            <person name="Gordon S.V."/>
            <person name="Hewinson R.G."/>
        </authorList>
    </citation>
    <scope>NUCLEOTIDE SEQUENCE [LARGE SCALE GENOMIC DNA]</scope>
    <source>
        <strain>ATCC BAA-935 / AF2122/97</strain>
    </source>
</reference>
<reference key="2">
    <citation type="journal article" date="2017" name="Genome Announc.">
        <title>Updated reference genome sequence and annotation of Mycobacterium bovis AF2122/97.</title>
        <authorList>
            <person name="Malone K.M."/>
            <person name="Farrell D."/>
            <person name="Stuber T.P."/>
            <person name="Schubert O.T."/>
            <person name="Aebersold R."/>
            <person name="Robbe-Austerman S."/>
            <person name="Gordon S.V."/>
        </authorList>
    </citation>
    <scope>NUCLEOTIDE SEQUENCE [LARGE SCALE GENOMIC DNA]</scope>
    <scope>GENOME REANNOTATION</scope>
    <source>
        <strain>ATCC BAA-935 / AF2122/97</strain>
    </source>
</reference>
<name>SUGFT_MYCBO</name>
<comment type="function">
    <text evidence="1">Sugar N-formyltransferase that catalyzes the conversion of dTDP-4-amino-4,6-dideoxyglucose into dTDP-4-formamido-4,6-dideoxyglucose using N(10)-formyltetrahydrofolate as the carbon source. Plays a role in virulence.</text>
</comment>
<comment type="catalytic activity">
    <reaction evidence="1">
        <text>dTDP-4-amino-4,6-dideoxy-alpha-D-glucose + (6R)-10-formyltetrahydrofolate = dTDP-4-formamido-4,6-dideoxy-alpha-D-glucose + (6S)-5,6,7,8-tetrahydrofolate + H(+)</text>
        <dbReference type="Rhea" id="RHEA:54032"/>
        <dbReference type="ChEBI" id="CHEBI:15378"/>
        <dbReference type="ChEBI" id="CHEBI:57453"/>
        <dbReference type="ChEBI" id="CHEBI:68501"/>
        <dbReference type="ChEBI" id="CHEBI:138034"/>
        <dbReference type="ChEBI" id="CHEBI:195366"/>
    </reaction>
</comment>
<comment type="subunit">
    <text evidence="1">Homodimer.</text>
</comment>
<comment type="similarity">
    <text evidence="2">Belongs to the dTDP-Qui4N formyltransferase family.</text>
</comment>
<gene>
    <name type="ordered locus">BQ2027_MB3438C</name>
</gene>
<organism>
    <name type="scientific">Mycobacterium bovis (strain ATCC BAA-935 / AF2122/97)</name>
    <dbReference type="NCBI Taxonomy" id="233413"/>
    <lineage>
        <taxon>Bacteria</taxon>
        <taxon>Bacillati</taxon>
        <taxon>Actinomycetota</taxon>
        <taxon>Actinomycetes</taxon>
        <taxon>Mycobacteriales</taxon>
        <taxon>Mycobacteriaceae</taxon>
        <taxon>Mycobacterium</taxon>
        <taxon>Mycobacterium tuberculosis complex</taxon>
    </lineage>
</organism>
<accession>P65074</accession>
<accession>A0A1R3Y4T5</accession>
<accession>Q50721</accession>
<accession>X2BNC5</accession>
<proteinExistence type="inferred from homology"/>
<feature type="chain" id="PRO_0000014152" description="dTDP-4-amino-4,6-dideoxyglucose formyltransferase">
    <location>
        <begin position="1"/>
        <end position="234"/>
    </location>
</feature>
<feature type="active site" description="Proton acceptor" evidence="1">
    <location>
        <position position="81"/>
    </location>
</feature>
<feature type="binding site" evidence="1">
    <location>
        <position position="9"/>
    </location>
    <ligand>
        <name>dTDP-4-amino-4,6-dideoxy-alpha-D-glucose</name>
        <dbReference type="ChEBI" id="CHEBI:68501"/>
    </ligand>
</feature>
<feature type="binding site" evidence="1">
    <location>
        <begin position="62"/>
        <end position="64"/>
    </location>
    <ligand>
        <name>dTDP-4-amino-4,6-dideoxy-alpha-D-glucose</name>
        <dbReference type="ChEBI" id="CHEBI:68501"/>
    </ligand>
</feature>
<feature type="binding site" evidence="1">
    <location>
        <begin position="65"/>
        <end position="67"/>
    </location>
    <ligand>
        <name>(6R)-10-formyltetrahydrofolate</name>
        <dbReference type="ChEBI" id="CHEBI:195366"/>
    </ligand>
</feature>
<feature type="binding site" evidence="1">
    <location>
        <begin position="90"/>
        <end position="94"/>
    </location>
    <ligand>
        <name>dTDP-4-amino-4,6-dideoxy-alpha-D-glucose</name>
        <dbReference type="ChEBI" id="CHEBI:68501"/>
    </ligand>
</feature>
<feature type="binding site" evidence="1">
    <location>
        <position position="112"/>
    </location>
    <ligand>
        <name>(6R)-10-formyltetrahydrofolate</name>
        <dbReference type="ChEBI" id="CHEBI:195366"/>
    </ligand>
</feature>
<feature type="binding site" evidence="1">
    <location>
        <position position="116"/>
    </location>
    <ligand>
        <name>(6R)-10-formyltetrahydrofolate</name>
        <dbReference type="ChEBI" id="CHEBI:195366"/>
    </ligand>
</feature>
<feature type="binding site" evidence="1">
    <location>
        <position position="175"/>
    </location>
    <ligand>
        <name>(6R)-10-formyltetrahydrofolate</name>
        <dbReference type="ChEBI" id="CHEBI:195366"/>
    </ligand>
</feature>
<feature type="binding site" evidence="1">
    <location>
        <position position="209"/>
    </location>
    <ligand>
        <name>dTDP-4-amino-4,6-dideoxy-alpha-D-glucose</name>
        <dbReference type="ChEBI" id="CHEBI:68501"/>
    </ligand>
</feature>
<keyword id="KW-0119">Carbohydrate metabolism</keyword>
<keyword id="KW-1185">Reference proteome</keyword>
<keyword id="KW-0808">Transferase</keyword>
<dbReference type="EC" id="2.1.2.-" evidence="1"/>
<dbReference type="EMBL" id="LT708304">
    <property type="protein sequence ID" value="SIU02066.1"/>
    <property type="molecule type" value="Genomic_DNA"/>
</dbReference>
<dbReference type="RefSeq" id="NP_857078.1">
    <property type="nucleotide sequence ID" value="NC_002945.3"/>
</dbReference>
<dbReference type="RefSeq" id="WP_003417980.1">
    <property type="nucleotide sequence ID" value="NC_002945.4"/>
</dbReference>
<dbReference type="SMR" id="P65074"/>
<dbReference type="KEGG" id="mbo:BQ2027_MB3438C"/>
<dbReference type="PATRIC" id="fig|233413.5.peg.3773"/>
<dbReference type="Proteomes" id="UP000001419">
    <property type="component" value="Chromosome"/>
</dbReference>
<dbReference type="GO" id="GO:0005829">
    <property type="term" value="C:cytosol"/>
    <property type="evidence" value="ECO:0007669"/>
    <property type="project" value="TreeGrafter"/>
</dbReference>
<dbReference type="GO" id="GO:0004479">
    <property type="term" value="F:methionyl-tRNA formyltransferase activity"/>
    <property type="evidence" value="ECO:0007669"/>
    <property type="project" value="TreeGrafter"/>
</dbReference>
<dbReference type="Gene3D" id="3.40.50.170">
    <property type="entry name" value="Formyl transferase, N-terminal domain"/>
    <property type="match status" value="1"/>
</dbReference>
<dbReference type="InterPro" id="IPR002376">
    <property type="entry name" value="Formyl_transf_N"/>
</dbReference>
<dbReference type="InterPro" id="IPR036477">
    <property type="entry name" value="Formyl_transf_N_sf"/>
</dbReference>
<dbReference type="InterPro" id="IPR040660">
    <property type="entry name" value="N_formyltrans_C"/>
</dbReference>
<dbReference type="NCBIfam" id="NF005755">
    <property type="entry name" value="PRK07579.1"/>
    <property type="match status" value="1"/>
</dbReference>
<dbReference type="PANTHER" id="PTHR11138">
    <property type="entry name" value="METHIONYL-TRNA FORMYLTRANSFERASE"/>
    <property type="match status" value="1"/>
</dbReference>
<dbReference type="PANTHER" id="PTHR11138:SF5">
    <property type="entry name" value="METHIONYL-TRNA FORMYLTRANSFERASE, MITOCHONDRIAL"/>
    <property type="match status" value="1"/>
</dbReference>
<dbReference type="Pfam" id="PF00551">
    <property type="entry name" value="Formyl_trans_N"/>
    <property type="match status" value="1"/>
</dbReference>
<dbReference type="Pfam" id="PF18216">
    <property type="entry name" value="N_formyltrans_C"/>
    <property type="match status" value="1"/>
</dbReference>
<dbReference type="SUPFAM" id="SSF53328">
    <property type="entry name" value="Formyltransferase"/>
    <property type="match status" value="1"/>
</dbReference>
<evidence type="ECO:0000250" key="1">
    <source>
        <dbReference type="UniProtKB" id="P9WKZ3"/>
    </source>
</evidence>
<evidence type="ECO:0000305" key="2"/>